<evidence type="ECO:0000255" key="1">
    <source>
        <dbReference type="HAMAP-Rule" id="MF_01726"/>
    </source>
</evidence>
<proteinExistence type="inferred from homology"/>
<organism>
    <name type="scientific">Mycoplasma capricolum subsp. capricolum (strain California kid / ATCC 27343 / NCTC 10154)</name>
    <dbReference type="NCBI Taxonomy" id="340047"/>
    <lineage>
        <taxon>Bacteria</taxon>
        <taxon>Bacillati</taxon>
        <taxon>Mycoplasmatota</taxon>
        <taxon>Mollicutes</taxon>
        <taxon>Mycoplasmataceae</taxon>
        <taxon>Mycoplasma</taxon>
    </lineage>
</organism>
<protein>
    <recommendedName>
        <fullName evidence="1">Spermidine/putrescine import ATP-binding protein PotA</fullName>
        <ecNumber evidence="1">7.6.2.11</ecNumber>
    </recommendedName>
</protein>
<dbReference type="EC" id="7.6.2.11" evidence="1"/>
<dbReference type="EMBL" id="CP000123">
    <property type="protein sequence ID" value="ABC01657.1"/>
    <property type="molecule type" value="Genomic_DNA"/>
</dbReference>
<dbReference type="RefSeq" id="WP_011387091.1">
    <property type="nucleotide sequence ID" value="NC_007633.1"/>
</dbReference>
<dbReference type="SMR" id="Q2SSS4"/>
<dbReference type="GeneID" id="93426593"/>
<dbReference type="KEGG" id="mcp:MCAP_0202"/>
<dbReference type="HOGENOM" id="CLU_000604_1_1_14"/>
<dbReference type="Proteomes" id="UP000001928">
    <property type="component" value="Chromosome"/>
</dbReference>
<dbReference type="GO" id="GO:0043190">
    <property type="term" value="C:ATP-binding cassette (ABC) transporter complex"/>
    <property type="evidence" value="ECO:0007669"/>
    <property type="project" value="InterPro"/>
</dbReference>
<dbReference type="GO" id="GO:0015594">
    <property type="term" value="F:ABC-type putrescine transporter activity"/>
    <property type="evidence" value="ECO:0007669"/>
    <property type="project" value="InterPro"/>
</dbReference>
<dbReference type="GO" id="GO:0005524">
    <property type="term" value="F:ATP binding"/>
    <property type="evidence" value="ECO:0007669"/>
    <property type="project" value="UniProtKB-KW"/>
</dbReference>
<dbReference type="GO" id="GO:0016887">
    <property type="term" value="F:ATP hydrolysis activity"/>
    <property type="evidence" value="ECO:0007669"/>
    <property type="project" value="InterPro"/>
</dbReference>
<dbReference type="CDD" id="cd03300">
    <property type="entry name" value="ABC_PotA_N"/>
    <property type="match status" value="1"/>
</dbReference>
<dbReference type="FunFam" id="3.40.50.300:FF:000133">
    <property type="entry name" value="Spermidine/putrescine import ATP-binding protein PotA"/>
    <property type="match status" value="1"/>
</dbReference>
<dbReference type="Gene3D" id="2.40.50.100">
    <property type="match status" value="1"/>
</dbReference>
<dbReference type="Gene3D" id="3.40.50.300">
    <property type="entry name" value="P-loop containing nucleotide triphosphate hydrolases"/>
    <property type="match status" value="1"/>
</dbReference>
<dbReference type="InterPro" id="IPR003593">
    <property type="entry name" value="AAA+_ATPase"/>
</dbReference>
<dbReference type="InterPro" id="IPR050093">
    <property type="entry name" value="ABC_SmlMolc_Importer"/>
</dbReference>
<dbReference type="InterPro" id="IPR003439">
    <property type="entry name" value="ABC_transporter-like_ATP-bd"/>
</dbReference>
<dbReference type="InterPro" id="IPR017871">
    <property type="entry name" value="ABC_transporter-like_CS"/>
</dbReference>
<dbReference type="InterPro" id="IPR008995">
    <property type="entry name" value="Mo/tungstate-bd_C_term_dom"/>
</dbReference>
<dbReference type="InterPro" id="IPR027417">
    <property type="entry name" value="P-loop_NTPase"/>
</dbReference>
<dbReference type="InterPro" id="IPR017879">
    <property type="entry name" value="PotA_ATP-bd"/>
</dbReference>
<dbReference type="InterPro" id="IPR013611">
    <property type="entry name" value="Transp-assoc_OB_typ2"/>
</dbReference>
<dbReference type="NCBIfam" id="NF043075">
    <property type="entry name" value="MMSYN1_0197"/>
    <property type="match status" value="1"/>
</dbReference>
<dbReference type="PANTHER" id="PTHR42781">
    <property type="entry name" value="SPERMIDINE/PUTRESCINE IMPORT ATP-BINDING PROTEIN POTA"/>
    <property type="match status" value="1"/>
</dbReference>
<dbReference type="PANTHER" id="PTHR42781:SF4">
    <property type="entry name" value="SPERMIDINE_PUTRESCINE IMPORT ATP-BINDING PROTEIN POTA"/>
    <property type="match status" value="1"/>
</dbReference>
<dbReference type="Pfam" id="PF00005">
    <property type="entry name" value="ABC_tran"/>
    <property type="match status" value="1"/>
</dbReference>
<dbReference type="Pfam" id="PF08402">
    <property type="entry name" value="TOBE_2"/>
    <property type="match status" value="1"/>
</dbReference>
<dbReference type="SMART" id="SM00382">
    <property type="entry name" value="AAA"/>
    <property type="match status" value="1"/>
</dbReference>
<dbReference type="SUPFAM" id="SSF50331">
    <property type="entry name" value="MOP-like"/>
    <property type="match status" value="1"/>
</dbReference>
<dbReference type="SUPFAM" id="SSF52540">
    <property type="entry name" value="P-loop containing nucleoside triphosphate hydrolases"/>
    <property type="match status" value="1"/>
</dbReference>
<dbReference type="PROSITE" id="PS00211">
    <property type="entry name" value="ABC_TRANSPORTER_1"/>
    <property type="match status" value="1"/>
</dbReference>
<dbReference type="PROSITE" id="PS50893">
    <property type="entry name" value="ABC_TRANSPORTER_2"/>
    <property type="match status" value="1"/>
</dbReference>
<dbReference type="PROSITE" id="PS51305">
    <property type="entry name" value="POTA"/>
    <property type="match status" value="1"/>
</dbReference>
<keyword id="KW-0067">ATP-binding</keyword>
<keyword id="KW-1003">Cell membrane</keyword>
<keyword id="KW-0472">Membrane</keyword>
<keyword id="KW-0547">Nucleotide-binding</keyword>
<keyword id="KW-1278">Translocase</keyword>
<keyword id="KW-0813">Transport</keyword>
<feature type="chain" id="PRO_0000286254" description="Spermidine/putrescine import ATP-binding protein PotA">
    <location>
        <begin position="1"/>
        <end position="351"/>
    </location>
</feature>
<feature type="domain" description="ABC transporter" evidence="1">
    <location>
        <begin position="6"/>
        <end position="236"/>
    </location>
</feature>
<feature type="binding site" evidence="1">
    <location>
        <begin position="38"/>
        <end position="45"/>
    </location>
    <ligand>
        <name>ATP</name>
        <dbReference type="ChEBI" id="CHEBI:30616"/>
    </ligand>
</feature>
<sequence>MENNILELRNVTKEYDGQVVLKGISFNVKEGEFITLLGPSGCGKTTILKIIGGSQKPNSGEILFEDKNLIPIPINKRQFNTIFQSYALFPHLNVFDNVAFGLTIKKTKKDIIEREVMRQIRQVGLEGYENKKIDELSGGQKQRVAIARALVMKPKVLLLDEPMAALDVKLRKTMQEELKRLQQDIGITFIMVSHDQEEALSMSDRIVVMNQGTIQQIGTPEEIYNEPENAWVANFIGSSNIITDGIFLEDNKIKFDGKVFECIDTNFGENESSIDIIIRPEDIIIKNPNNGFFNAKVIKTTFKGIHWEVVVETSKKRQWIIHTINEYDIDQQVSIKWKPANVHVMWKEVDN</sequence>
<gene>
    <name evidence="1" type="primary">potA</name>
    <name type="ordered locus">MCAP_0202</name>
</gene>
<reference key="1">
    <citation type="submission" date="2005-09" db="EMBL/GenBank/DDBJ databases">
        <authorList>
            <person name="Glass J.I."/>
            <person name="Lartigue C."/>
            <person name="Pfannkoch C."/>
            <person name="Baden-Tillson H."/>
            <person name="Smith H.O."/>
            <person name="Venter J.C."/>
            <person name="Roske K."/>
            <person name="Wise K.S."/>
            <person name="Calcutt M.J."/>
            <person name="Nelson W.C."/>
            <person name="Nierman W.C."/>
        </authorList>
    </citation>
    <scope>NUCLEOTIDE SEQUENCE [LARGE SCALE GENOMIC DNA]</scope>
    <source>
        <strain>California kid / ATCC 27343 / NCTC 10154</strain>
    </source>
</reference>
<name>POTA_MYCCT</name>
<accession>Q2SSS4</accession>
<comment type="function">
    <text evidence="1">Part of the ABC transporter complex PotABCD involved in spermidine/putrescine import. Responsible for energy coupling to the transport system.</text>
</comment>
<comment type="catalytic activity">
    <reaction evidence="1">
        <text>ATP + H2O + polyamine-[polyamine-binding protein]Side 1 = ADP + phosphate + polyamineSide 2 + [polyamine-binding protein]Side 1.</text>
        <dbReference type="EC" id="7.6.2.11"/>
    </reaction>
</comment>
<comment type="subunit">
    <text evidence="1">The complex is composed of two ATP-binding proteins (PotA), two transmembrane proteins (PotB and PotC) and a solute-binding protein (PotD).</text>
</comment>
<comment type="subcellular location">
    <subcellularLocation>
        <location evidence="1">Cell membrane</location>
        <topology evidence="1">Peripheral membrane protein</topology>
    </subcellularLocation>
</comment>
<comment type="similarity">
    <text evidence="1">Belongs to the ABC transporter superfamily. Spermidine/putrescine importer (TC 3.A.1.11.1) family.</text>
</comment>